<keyword id="KW-1185">Reference proteome</keyword>
<gene>
    <name type="primary">yhcM</name>
    <name type="ordered locus">BSU09140</name>
</gene>
<proteinExistence type="predicted"/>
<dbReference type="EMBL" id="X96983">
    <property type="protein sequence ID" value="CAA65697.1"/>
    <property type="molecule type" value="Genomic_DNA"/>
</dbReference>
<dbReference type="EMBL" id="AL009126">
    <property type="protein sequence ID" value="CAB12742.1"/>
    <property type="molecule type" value="Genomic_DNA"/>
</dbReference>
<dbReference type="PIR" id="A69823">
    <property type="entry name" value="A69823"/>
</dbReference>
<dbReference type="RefSeq" id="NP_388795.1">
    <property type="nucleotide sequence ID" value="NC_000964.3"/>
</dbReference>
<dbReference type="RefSeq" id="WP_003245285.1">
    <property type="nucleotide sequence ID" value="NZ_OZ025638.1"/>
</dbReference>
<dbReference type="SMR" id="P54597"/>
<dbReference type="FunCoup" id="P54597">
    <property type="interactions" value="90"/>
</dbReference>
<dbReference type="STRING" id="224308.BSU09140"/>
<dbReference type="PaxDb" id="224308-BSU09140"/>
<dbReference type="DNASU" id="939279"/>
<dbReference type="EnsemblBacteria" id="CAB12742">
    <property type="protein sequence ID" value="CAB12742"/>
    <property type="gene ID" value="BSU_09140"/>
</dbReference>
<dbReference type="GeneID" id="939279"/>
<dbReference type="KEGG" id="bsu:BSU09140"/>
<dbReference type="PATRIC" id="fig|224308.179.peg.988"/>
<dbReference type="eggNOG" id="ENOG5030CKX">
    <property type="taxonomic scope" value="Bacteria"/>
</dbReference>
<dbReference type="InParanoid" id="P54597"/>
<dbReference type="OrthoDB" id="2937646at2"/>
<dbReference type="BioCyc" id="BSUB:BSU09140-MONOMER"/>
<dbReference type="Proteomes" id="UP000001570">
    <property type="component" value="Chromosome"/>
</dbReference>
<accession>P54597</accession>
<feature type="chain" id="PRO_0000049562" description="Uncharacterized protein YhcM">
    <location>
        <begin position="1"/>
        <end position="151"/>
    </location>
</feature>
<feature type="region of interest" description="Disordered" evidence="1">
    <location>
        <begin position="40"/>
        <end position="125"/>
    </location>
</feature>
<feature type="compositionally biased region" description="Polar residues" evidence="1">
    <location>
        <begin position="40"/>
        <end position="57"/>
    </location>
</feature>
<feature type="compositionally biased region" description="Low complexity" evidence="1">
    <location>
        <begin position="83"/>
        <end position="110"/>
    </location>
</feature>
<name>YHCM_BACSU</name>
<evidence type="ECO:0000256" key="1">
    <source>
        <dbReference type="SAM" id="MobiDB-lite"/>
    </source>
</evidence>
<reference key="1">
    <citation type="journal article" date="1996" name="Microbiology">
        <title>A 22 kb DNA sequence in the cspB-glpPFKD region at 75 degrees on the Bacillus subtilis chromosome.</title>
        <authorList>
            <person name="Noback M.A."/>
            <person name="Terpstra P."/>
            <person name="Holsappel S."/>
            <person name="Venema G."/>
            <person name="Bron S."/>
        </authorList>
    </citation>
    <scope>NUCLEOTIDE SEQUENCE [GENOMIC DNA]</scope>
    <source>
        <strain>168</strain>
    </source>
</reference>
<reference key="2">
    <citation type="journal article" date="1997" name="Nature">
        <title>The complete genome sequence of the Gram-positive bacterium Bacillus subtilis.</title>
        <authorList>
            <person name="Kunst F."/>
            <person name="Ogasawara N."/>
            <person name="Moszer I."/>
            <person name="Albertini A.M."/>
            <person name="Alloni G."/>
            <person name="Azevedo V."/>
            <person name="Bertero M.G."/>
            <person name="Bessieres P."/>
            <person name="Bolotin A."/>
            <person name="Borchert S."/>
            <person name="Borriss R."/>
            <person name="Boursier L."/>
            <person name="Brans A."/>
            <person name="Braun M."/>
            <person name="Brignell S.C."/>
            <person name="Bron S."/>
            <person name="Brouillet S."/>
            <person name="Bruschi C.V."/>
            <person name="Caldwell B."/>
            <person name="Capuano V."/>
            <person name="Carter N.M."/>
            <person name="Choi S.-K."/>
            <person name="Codani J.-J."/>
            <person name="Connerton I.F."/>
            <person name="Cummings N.J."/>
            <person name="Daniel R.A."/>
            <person name="Denizot F."/>
            <person name="Devine K.M."/>
            <person name="Duesterhoeft A."/>
            <person name="Ehrlich S.D."/>
            <person name="Emmerson P.T."/>
            <person name="Entian K.-D."/>
            <person name="Errington J."/>
            <person name="Fabret C."/>
            <person name="Ferrari E."/>
            <person name="Foulger D."/>
            <person name="Fritz C."/>
            <person name="Fujita M."/>
            <person name="Fujita Y."/>
            <person name="Fuma S."/>
            <person name="Galizzi A."/>
            <person name="Galleron N."/>
            <person name="Ghim S.-Y."/>
            <person name="Glaser P."/>
            <person name="Goffeau A."/>
            <person name="Golightly E.J."/>
            <person name="Grandi G."/>
            <person name="Guiseppi G."/>
            <person name="Guy B.J."/>
            <person name="Haga K."/>
            <person name="Haiech J."/>
            <person name="Harwood C.R."/>
            <person name="Henaut A."/>
            <person name="Hilbert H."/>
            <person name="Holsappel S."/>
            <person name="Hosono S."/>
            <person name="Hullo M.-F."/>
            <person name="Itaya M."/>
            <person name="Jones L.-M."/>
            <person name="Joris B."/>
            <person name="Karamata D."/>
            <person name="Kasahara Y."/>
            <person name="Klaerr-Blanchard M."/>
            <person name="Klein C."/>
            <person name="Kobayashi Y."/>
            <person name="Koetter P."/>
            <person name="Koningstein G."/>
            <person name="Krogh S."/>
            <person name="Kumano M."/>
            <person name="Kurita K."/>
            <person name="Lapidus A."/>
            <person name="Lardinois S."/>
            <person name="Lauber J."/>
            <person name="Lazarevic V."/>
            <person name="Lee S.-M."/>
            <person name="Levine A."/>
            <person name="Liu H."/>
            <person name="Masuda S."/>
            <person name="Mauel C."/>
            <person name="Medigue C."/>
            <person name="Medina N."/>
            <person name="Mellado R.P."/>
            <person name="Mizuno M."/>
            <person name="Moestl D."/>
            <person name="Nakai S."/>
            <person name="Noback M."/>
            <person name="Noone D."/>
            <person name="O'Reilly M."/>
            <person name="Ogawa K."/>
            <person name="Ogiwara A."/>
            <person name="Oudega B."/>
            <person name="Park S.-H."/>
            <person name="Parro V."/>
            <person name="Pohl T.M."/>
            <person name="Portetelle D."/>
            <person name="Porwollik S."/>
            <person name="Prescott A.M."/>
            <person name="Presecan E."/>
            <person name="Pujic P."/>
            <person name="Purnelle B."/>
            <person name="Rapoport G."/>
            <person name="Rey M."/>
            <person name="Reynolds S."/>
            <person name="Rieger M."/>
            <person name="Rivolta C."/>
            <person name="Rocha E."/>
            <person name="Roche B."/>
            <person name="Rose M."/>
            <person name="Sadaie Y."/>
            <person name="Sato T."/>
            <person name="Scanlan E."/>
            <person name="Schleich S."/>
            <person name="Schroeter R."/>
            <person name="Scoffone F."/>
            <person name="Sekiguchi J."/>
            <person name="Sekowska A."/>
            <person name="Seror S.J."/>
            <person name="Serror P."/>
            <person name="Shin B.-S."/>
            <person name="Soldo B."/>
            <person name="Sorokin A."/>
            <person name="Tacconi E."/>
            <person name="Takagi T."/>
            <person name="Takahashi H."/>
            <person name="Takemaru K."/>
            <person name="Takeuchi M."/>
            <person name="Tamakoshi A."/>
            <person name="Tanaka T."/>
            <person name="Terpstra P."/>
            <person name="Tognoni A."/>
            <person name="Tosato V."/>
            <person name="Uchiyama S."/>
            <person name="Vandenbol M."/>
            <person name="Vannier F."/>
            <person name="Vassarotti A."/>
            <person name="Viari A."/>
            <person name="Wambutt R."/>
            <person name="Wedler E."/>
            <person name="Wedler H."/>
            <person name="Weitzenegger T."/>
            <person name="Winters P."/>
            <person name="Wipat A."/>
            <person name="Yamamoto H."/>
            <person name="Yamane K."/>
            <person name="Yasumoto K."/>
            <person name="Yata K."/>
            <person name="Yoshida K."/>
            <person name="Yoshikawa H.-F."/>
            <person name="Zumstein E."/>
            <person name="Yoshikawa H."/>
            <person name="Danchin A."/>
        </authorList>
    </citation>
    <scope>NUCLEOTIDE SEQUENCE [LARGE SCALE GENOMIC DNA]</scope>
    <source>
        <strain>168</strain>
    </source>
</reference>
<protein>
    <recommendedName>
        <fullName>Uncharacterized protein YhcM</fullName>
    </recommendedName>
</protein>
<sequence>MLFNQRRGISPAALIIGSTMLITALSPQIRQRISGFITGQMNRRNSENNTFDASNVGNMVKQAFSGSSGSSGDNQDRSQHQSQRQNGRQHQHAGQQQPQHQHTQSQTRQTETAAKKRQPHYAEPIHFEQNAMNVMDDNTMMEMLEDLEPGR</sequence>
<organism>
    <name type="scientific">Bacillus subtilis (strain 168)</name>
    <dbReference type="NCBI Taxonomy" id="224308"/>
    <lineage>
        <taxon>Bacteria</taxon>
        <taxon>Bacillati</taxon>
        <taxon>Bacillota</taxon>
        <taxon>Bacilli</taxon>
        <taxon>Bacillales</taxon>
        <taxon>Bacillaceae</taxon>
        <taxon>Bacillus</taxon>
    </lineage>
</organism>